<sequence length="273" mass="30729">MSDIEDLASGGLFDEPKDFYKPEEQPGSDSYARQEKHVAASEYKEPTNFNLRLTAKNPLWGHLLWNAGKVTSDYLDEHSKELVEGKKVIEFGAGAGLPSLLCHAVGAKQVVITDYPDADLLYNLKYNVDQLKKDWDAKNADFSGPSPCADVSSMKVEGFIWGNDASELIEMSGGTGYDLVILSDVVFNHSEHAKLVRSAKELLAPGGKVFVVFTPHRAKLFNEDLDFFRRAKDEAGFESEKLFELKYYPMFEEEEETKELRSMVFGYMLTLKE</sequence>
<protein>
    <recommendedName>
        <fullName evidence="1">Protein N-terminal and lysine N-methyltransferase EFM7</fullName>
        <ecNumber evidence="1">2.1.1.-</ecNumber>
    </recommendedName>
    <alternativeName>
        <fullName evidence="1">Elongation factor methyltransferase 7</fullName>
    </alternativeName>
</protein>
<feature type="chain" id="PRO_0000096900" description="Protein N-terminal and lysine N-methyltransferase EFM7">
    <location>
        <begin position="1"/>
        <end position="273"/>
    </location>
</feature>
<feature type="region of interest" description="Disordered" evidence="2">
    <location>
        <begin position="1"/>
        <end position="32"/>
    </location>
</feature>
<feature type="compositionally biased region" description="Basic and acidic residues" evidence="2">
    <location>
        <begin position="14"/>
        <end position="24"/>
    </location>
</feature>
<feature type="binding site" evidence="1">
    <location>
        <position position="65"/>
    </location>
    <ligand>
        <name>S-adenosyl-L-methionine</name>
        <dbReference type="ChEBI" id="CHEBI:59789"/>
    </ligand>
</feature>
<feature type="binding site" evidence="1">
    <location>
        <begin position="92"/>
        <end position="94"/>
    </location>
    <ligand>
        <name>S-adenosyl-L-methionine</name>
        <dbReference type="ChEBI" id="CHEBI:59789"/>
    </ligand>
</feature>
<feature type="binding site" evidence="1">
    <location>
        <position position="114"/>
    </location>
    <ligand>
        <name>S-adenosyl-L-methionine</name>
        <dbReference type="ChEBI" id="CHEBI:59789"/>
    </ligand>
</feature>
<feature type="binding site" evidence="1">
    <location>
        <position position="161"/>
    </location>
    <ligand>
        <name>S-adenosyl-L-methionine</name>
        <dbReference type="ChEBI" id="CHEBI:59789"/>
    </ligand>
</feature>
<feature type="binding site" evidence="1">
    <location>
        <position position="183"/>
    </location>
    <ligand>
        <name>S-adenosyl-L-methionine</name>
        <dbReference type="ChEBI" id="CHEBI:59789"/>
    </ligand>
</feature>
<evidence type="ECO:0000255" key="1">
    <source>
        <dbReference type="HAMAP-Rule" id="MF_03223"/>
    </source>
</evidence>
<evidence type="ECO:0000256" key="2">
    <source>
        <dbReference type="SAM" id="MobiDB-lite"/>
    </source>
</evidence>
<gene>
    <name evidence="1" type="primary">EFM7</name>
    <name type="synonym">NNT1</name>
    <name type="ordered locus">YALI0A09636g</name>
</gene>
<reference key="1">
    <citation type="journal article" date="2004" name="Nature">
        <title>Genome evolution in yeasts.</title>
        <authorList>
            <person name="Dujon B."/>
            <person name="Sherman D."/>
            <person name="Fischer G."/>
            <person name="Durrens P."/>
            <person name="Casaregola S."/>
            <person name="Lafontaine I."/>
            <person name="de Montigny J."/>
            <person name="Marck C."/>
            <person name="Neuveglise C."/>
            <person name="Talla E."/>
            <person name="Goffard N."/>
            <person name="Frangeul L."/>
            <person name="Aigle M."/>
            <person name="Anthouard V."/>
            <person name="Babour A."/>
            <person name="Barbe V."/>
            <person name="Barnay S."/>
            <person name="Blanchin S."/>
            <person name="Beckerich J.-M."/>
            <person name="Beyne E."/>
            <person name="Bleykasten C."/>
            <person name="Boisrame A."/>
            <person name="Boyer J."/>
            <person name="Cattolico L."/>
            <person name="Confanioleri F."/>
            <person name="de Daruvar A."/>
            <person name="Despons L."/>
            <person name="Fabre E."/>
            <person name="Fairhead C."/>
            <person name="Ferry-Dumazet H."/>
            <person name="Groppi A."/>
            <person name="Hantraye F."/>
            <person name="Hennequin C."/>
            <person name="Jauniaux N."/>
            <person name="Joyet P."/>
            <person name="Kachouri R."/>
            <person name="Kerrest A."/>
            <person name="Koszul R."/>
            <person name="Lemaire M."/>
            <person name="Lesur I."/>
            <person name="Ma L."/>
            <person name="Muller H."/>
            <person name="Nicaud J.-M."/>
            <person name="Nikolski M."/>
            <person name="Oztas S."/>
            <person name="Ozier-Kalogeropoulos O."/>
            <person name="Pellenz S."/>
            <person name="Potier S."/>
            <person name="Richard G.-F."/>
            <person name="Straub M.-L."/>
            <person name="Suleau A."/>
            <person name="Swennen D."/>
            <person name="Tekaia F."/>
            <person name="Wesolowski-Louvel M."/>
            <person name="Westhof E."/>
            <person name="Wirth B."/>
            <person name="Zeniou-Meyer M."/>
            <person name="Zivanovic Y."/>
            <person name="Bolotin-Fukuhara M."/>
            <person name="Thierry A."/>
            <person name="Bouchier C."/>
            <person name="Caudron B."/>
            <person name="Scarpelli C."/>
            <person name="Gaillardin C."/>
            <person name="Weissenbach J."/>
            <person name="Wincker P."/>
            <person name="Souciet J.-L."/>
        </authorList>
    </citation>
    <scope>NUCLEOTIDE SEQUENCE [LARGE SCALE GENOMIC DNA]</scope>
    <source>
        <strain>CLIB 122 / E 150</strain>
    </source>
</reference>
<comment type="function">
    <text evidence="1">S-adenosyl-L-methionine-dependent protein methyltransferase that trimethylates the N-terminal glycine 'Gly-2' of elongation factor 1-alpha, before also catalyzing the mono- and dimethylation of 'Lys-3'.</text>
</comment>
<comment type="subcellular location">
    <subcellularLocation>
        <location evidence="1">Cytoplasm</location>
    </subcellularLocation>
</comment>
<comment type="similarity">
    <text evidence="1">Belongs to the class I-like SAM-binding methyltransferase superfamily. EFM7 family.</text>
</comment>
<accession>Q6CHE9</accession>
<proteinExistence type="inferred from homology"/>
<keyword id="KW-0963">Cytoplasm</keyword>
<keyword id="KW-0489">Methyltransferase</keyword>
<keyword id="KW-1185">Reference proteome</keyword>
<keyword id="KW-0949">S-adenosyl-L-methionine</keyword>
<keyword id="KW-0808">Transferase</keyword>
<name>EFM7_YARLI</name>
<dbReference type="EC" id="2.1.1.-" evidence="1"/>
<dbReference type="EMBL" id="CR382127">
    <property type="protein sequence ID" value="CAG83839.1"/>
    <property type="molecule type" value="Genomic_DNA"/>
</dbReference>
<dbReference type="RefSeq" id="XP_499912.1">
    <property type="nucleotide sequence ID" value="XM_499912.1"/>
</dbReference>
<dbReference type="SMR" id="Q6CHE9"/>
<dbReference type="FunCoup" id="Q6CHE9">
    <property type="interactions" value="138"/>
</dbReference>
<dbReference type="STRING" id="284591.Q6CHE9"/>
<dbReference type="EnsemblFungi" id="CAG83839">
    <property type="protein sequence ID" value="CAG83839"/>
    <property type="gene ID" value="YALI0_A09636g"/>
</dbReference>
<dbReference type="KEGG" id="yli:2905822"/>
<dbReference type="VEuPathDB" id="FungiDB:YALI0_A09636g"/>
<dbReference type="HOGENOM" id="CLU_032409_0_0_1"/>
<dbReference type="InParanoid" id="Q6CHE9"/>
<dbReference type="OMA" id="SEYPLEW"/>
<dbReference type="OrthoDB" id="73513at4891"/>
<dbReference type="Proteomes" id="UP000001300">
    <property type="component" value="Chromosome A"/>
</dbReference>
<dbReference type="GO" id="GO:0005737">
    <property type="term" value="C:cytoplasm"/>
    <property type="evidence" value="ECO:0007669"/>
    <property type="project" value="UniProtKB-SubCell"/>
</dbReference>
<dbReference type="GO" id="GO:0071885">
    <property type="term" value="F:N-terminal protein N-methyltransferase activity"/>
    <property type="evidence" value="ECO:0007669"/>
    <property type="project" value="UniProtKB-UniRule"/>
</dbReference>
<dbReference type="GO" id="GO:0008276">
    <property type="term" value="F:protein methyltransferase activity"/>
    <property type="evidence" value="ECO:0000318"/>
    <property type="project" value="GO_Central"/>
</dbReference>
<dbReference type="GO" id="GO:0016279">
    <property type="term" value="F:protein-lysine N-methyltransferase activity"/>
    <property type="evidence" value="ECO:0007669"/>
    <property type="project" value="UniProtKB-UniRule"/>
</dbReference>
<dbReference type="GO" id="GO:0032259">
    <property type="term" value="P:methylation"/>
    <property type="evidence" value="ECO:0007669"/>
    <property type="project" value="UniProtKB-KW"/>
</dbReference>
<dbReference type="CDD" id="cd02440">
    <property type="entry name" value="AdoMet_MTases"/>
    <property type="match status" value="1"/>
</dbReference>
<dbReference type="Gene3D" id="3.40.50.150">
    <property type="entry name" value="Vaccinia Virus protein VP39"/>
    <property type="match status" value="1"/>
</dbReference>
<dbReference type="HAMAP" id="MF_03223">
    <property type="entry name" value="Methyltr_EFM7"/>
    <property type="match status" value="1"/>
</dbReference>
<dbReference type="InterPro" id="IPR025784">
    <property type="entry name" value="EFM7"/>
</dbReference>
<dbReference type="InterPro" id="IPR019410">
    <property type="entry name" value="Methyltransf_16"/>
</dbReference>
<dbReference type="InterPro" id="IPR029063">
    <property type="entry name" value="SAM-dependent_MTases_sf"/>
</dbReference>
<dbReference type="PANTHER" id="PTHR14614">
    <property type="entry name" value="HEPATOCELLULAR CARCINOMA-ASSOCIATED ANTIGEN"/>
    <property type="match status" value="1"/>
</dbReference>
<dbReference type="PANTHER" id="PTHR14614:SF10">
    <property type="entry name" value="PROTEIN N-TERMINAL AND LYSINE N-METHYLTRANSFERASE EFM7"/>
    <property type="match status" value="1"/>
</dbReference>
<dbReference type="Pfam" id="PF10294">
    <property type="entry name" value="Methyltransf_16"/>
    <property type="match status" value="1"/>
</dbReference>
<dbReference type="SUPFAM" id="SSF53335">
    <property type="entry name" value="S-adenosyl-L-methionine-dependent methyltransferases"/>
    <property type="match status" value="1"/>
</dbReference>
<dbReference type="PROSITE" id="PS51560">
    <property type="entry name" value="SAM_MT_NNT1"/>
    <property type="match status" value="1"/>
</dbReference>
<organism>
    <name type="scientific">Yarrowia lipolytica (strain CLIB 122 / E 150)</name>
    <name type="common">Yeast</name>
    <name type="synonym">Candida lipolytica</name>
    <dbReference type="NCBI Taxonomy" id="284591"/>
    <lineage>
        <taxon>Eukaryota</taxon>
        <taxon>Fungi</taxon>
        <taxon>Dikarya</taxon>
        <taxon>Ascomycota</taxon>
        <taxon>Saccharomycotina</taxon>
        <taxon>Dipodascomycetes</taxon>
        <taxon>Dipodascales</taxon>
        <taxon>Dipodascales incertae sedis</taxon>
        <taxon>Yarrowia</taxon>
    </lineage>
</organism>